<evidence type="ECO:0000255" key="1">
    <source>
        <dbReference type="HAMAP-Rule" id="MF_00086"/>
    </source>
</evidence>
<name>METK_BUCAI</name>
<accession>P57486</accession>
<feature type="chain" id="PRO_0000174502" description="S-adenosylmethionine synthase">
    <location>
        <begin position="1"/>
        <end position="378"/>
    </location>
</feature>
<feature type="region of interest" description="Flexible loop" evidence="1">
    <location>
        <begin position="99"/>
        <end position="109"/>
    </location>
</feature>
<feature type="binding site" description="in other chain" evidence="1">
    <location>
        <position position="15"/>
    </location>
    <ligand>
        <name>ATP</name>
        <dbReference type="ChEBI" id="CHEBI:30616"/>
        <note>ligand shared between two neighboring subunits</note>
    </ligand>
</feature>
<feature type="binding site" evidence="1">
    <location>
        <position position="17"/>
    </location>
    <ligand>
        <name>Mg(2+)</name>
        <dbReference type="ChEBI" id="CHEBI:18420"/>
    </ligand>
</feature>
<feature type="binding site" evidence="1">
    <location>
        <position position="43"/>
    </location>
    <ligand>
        <name>K(+)</name>
        <dbReference type="ChEBI" id="CHEBI:29103"/>
    </ligand>
</feature>
<feature type="binding site" description="in other chain" evidence="1">
    <location>
        <position position="56"/>
    </location>
    <ligand>
        <name>L-methionine</name>
        <dbReference type="ChEBI" id="CHEBI:57844"/>
        <note>ligand shared between two neighboring subunits</note>
    </ligand>
</feature>
<feature type="binding site" description="in other chain" evidence="1">
    <location>
        <position position="99"/>
    </location>
    <ligand>
        <name>L-methionine</name>
        <dbReference type="ChEBI" id="CHEBI:57844"/>
        <note>ligand shared between two neighboring subunits</note>
    </ligand>
</feature>
<feature type="binding site" description="in other chain" evidence="1">
    <location>
        <begin position="164"/>
        <end position="166"/>
    </location>
    <ligand>
        <name>ATP</name>
        <dbReference type="ChEBI" id="CHEBI:30616"/>
        <note>ligand shared between two neighboring subunits</note>
    </ligand>
</feature>
<feature type="binding site" description="in other chain" evidence="1">
    <location>
        <begin position="230"/>
        <end position="231"/>
    </location>
    <ligand>
        <name>ATP</name>
        <dbReference type="ChEBI" id="CHEBI:30616"/>
        <note>ligand shared between two neighboring subunits</note>
    </ligand>
</feature>
<feature type="binding site" evidence="1">
    <location>
        <position position="239"/>
    </location>
    <ligand>
        <name>ATP</name>
        <dbReference type="ChEBI" id="CHEBI:30616"/>
        <note>ligand shared between two neighboring subunits</note>
    </ligand>
</feature>
<feature type="binding site" evidence="1">
    <location>
        <position position="239"/>
    </location>
    <ligand>
        <name>L-methionine</name>
        <dbReference type="ChEBI" id="CHEBI:57844"/>
        <note>ligand shared between two neighboring subunits</note>
    </ligand>
</feature>
<feature type="binding site" description="in other chain" evidence="1">
    <location>
        <begin position="245"/>
        <end position="246"/>
    </location>
    <ligand>
        <name>ATP</name>
        <dbReference type="ChEBI" id="CHEBI:30616"/>
        <note>ligand shared between two neighboring subunits</note>
    </ligand>
</feature>
<feature type="binding site" evidence="1">
    <location>
        <position position="262"/>
    </location>
    <ligand>
        <name>ATP</name>
        <dbReference type="ChEBI" id="CHEBI:30616"/>
        <note>ligand shared between two neighboring subunits</note>
    </ligand>
</feature>
<feature type="binding site" evidence="1">
    <location>
        <position position="266"/>
    </location>
    <ligand>
        <name>ATP</name>
        <dbReference type="ChEBI" id="CHEBI:30616"/>
        <note>ligand shared between two neighboring subunits</note>
    </ligand>
</feature>
<feature type="binding site" description="in other chain" evidence="1">
    <location>
        <position position="270"/>
    </location>
    <ligand>
        <name>L-methionine</name>
        <dbReference type="ChEBI" id="CHEBI:57844"/>
        <note>ligand shared between two neighboring subunits</note>
    </ligand>
</feature>
<dbReference type="EC" id="2.5.1.6" evidence="1"/>
<dbReference type="EMBL" id="BA000003">
    <property type="protein sequence ID" value="BAB13109.1"/>
    <property type="molecule type" value="Genomic_DNA"/>
</dbReference>
<dbReference type="RefSeq" id="NP_240223.1">
    <property type="nucleotide sequence ID" value="NC_002528.1"/>
</dbReference>
<dbReference type="RefSeq" id="WP_009874364.1">
    <property type="nucleotide sequence ID" value="NZ_AP036055.1"/>
</dbReference>
<dbReference type="SMR" id="P57486"/>
<dbReference type="STRING" id="563178.BUAP5A_401"/>
<dbReference type="EnsemblBacteria" id="BAB13109">
    <property type="protein sequence ID" value="BAB13109"/>
    <property type="gene ID" value="BAB13109"/>
</dbReference>
<dbReference type="KEGG" id="buc:BU408"/>
<dbReference type="PATRIC" id="fig|107806.10.peg.420"/>
<dbReference type="eggNOG" id="COG0192">
    <property type="taxonomic scope" value="Bacteria"/>
</dbReference>
<dbReference type="HOGENOM" id="CLU_041802_1_1_6"/>
<dbReference type="UniPathway" id="UPA00315">
    <property type="reaction ID" value="UER00080"/>
</dbReference>
<dbReference type="Proteomes" id="UP000001806">
    <property type="component" value="Chromosome"/>
</dbReference>
<dbReference type="GO" id="GO:0005737">
    <property type="term" value="C:cytoplasm"/>
    <property type="evidence" value="ECO:0007669"/>
    <property type="project" value="UniProtKB-SubCell"/>
</dbReference>
<dbReference type="GO" id="GO:0005524">
    <property type="term" value="F:ATP binding"/>
    <property type="evidence" value="ECO:0007669"/>
    <property type="project" value="UniProtKB-UniRule"/>
</dbReference>
<dbReference type="GO" id="GO:0000287">
    <property type="term" value="F:magnesium ion binding"/>
    <property type="evidence" value="ECO:0007669"/>
    <property type="project" value="UniProtKB-UniRule"/>
</dbReference>
<dbReference type="GO" id="GO:0004478">
    <property type="term" value="F:methionine adenosyltransferase activity"/>
    <property type="evidence" value="ECO:0007669"/>
    <property type="project" value="UniProtKB-UniRule"/>
</dbReference>
<dbReference type="GO" id="GO:0006730">
    <property type="term" value="P:one-carbon metabolic process"/>
    <property type="evidence" value="ECO:0007669"/>
    <property type="project" value="UniProtKB-KW"/>
</dbReference>
<dbReference type="GO" id="GO:0006556">
    <property type="term" value="P:S-adenosylmethionine biosynthetic process"/>
    <property type="evidence" value="ECO:0007669"/>
    <property type="project" value="UniProtKB-UniRule"/>
</dbReference>
<dbReference type="CDD" id="cd18079">
    <property type="entry name" value="S-AdoMet_synt"/>
    <property type="match status" value="1"/>
</dbReference>
<dbReference type="FunFam" id="3.30.300.10:FF:000003">
    <property type="entry name" value="S-adenosylmethionine synthase"/>
    <property type="match status" value="1"/>
</dbReference>
<dbReference type="Gene3D" id="3.30.300.10">
    <property type="match status" value="3"/>
</dbReference>
<dbReference type="HAMAP" id="MF_00086">
    <property type="entry name" value="S_AdoMet_synth1"/>
    <property type="match status" value="1"/>
</dbReference>
<dbReference type="InterPro" id="IPR022631">
    <property type="entry name" value="ADOMET_SYNTHASE_CS"/>
</dbReference>
<dbReference type="InterPro" id="IPR022630">
    <property type="entry name" value="S-AdoMet_synt_C"/>
</dbReference>
<dbReference type="InterPro" id="IPR022629">
    <property type="entry name" value="S-AdoMet_synt_central"/>
</dbReference>
<dbReference type="InterPro" id="IPR022628">
    <property type="entry name" value="S-AdoMet_synt_N"/>
</dbReference>
<dbReference type="InterPro" id="IPR002133">
    <property type="entry name" value="S-AdoMet_synthetase"/>
</dbReference>
<dbReference type="InterPro" id="IPR022636">
    <property type="entry name" value="S-AdoMet_synthetase_sfam"/>
</dbReference>
<dbReference type="NCBIfam" id="TIGR01034">
    <property type="entry name" value="metK"/>
    <property type="match status" value="1"/>
</dbReference>
<dbReference type="PANTHER" id="PTHR11964">
    <property type="entry name" value="S-ADENOSYLMETHIONINE SYNTHETASE"/>
    <property type="match status" value="1"/>
</dbReference>
<dbReference type="Pfam" id="PF02773">
    <property type="entry name" value="S-AdoMet_synt_C"/>
    <property type="match status" value="1"/>
</dbReference>
<dbReference type="Pfam" id="PF02772">
    <property type="entry name" value="S-AdoMet_synt_M"/>
    <property type="match status" value="1"/>
</dbReference>
<dbReference type="Pfam" id="PF00438">
    <property type="entry name" value="S-AdoMet_synt_N"/>
    <property type="match status" value="1"/>
</dbReference>
<dbReference type="PIRSF" id="PIRSF000497">
    <property type="entry name" value="MAT"/>
    <property type="match status" value="1"/>
</dbReference>
<dbReference type="SUPFAM" id="SSF55973">
    <property type="entry name" value="S-adenosylmethionine synthetase"/>
    <property type="match status" value="3"/>
</dbReference>
<dbReference type="PROSITE" id="PS00376">
    <property type="entry name" value="ADOMET_SYNTHASE_1"/>
    <property type="match status" value="1"/>
</dbReference>
<dbReference type="PROSITE" id="PS00377">
    <property type="entry name" value="ADOMET_SYNTHASE_2"/>
    <property type="match status" value="1"/>
</dbReference>
<gene>
    <name evidence="1" type="primary">metK</name>
    <name type="ordered locus">BU408</name>
</gene>
<sequence length="378" mass="41706">MTEYLFTSESVSEGHPDKIADQISDALLDEILKQDLKARVACETYVKTGMVLIGGEITTTAWVDVEEITRKTINDIGYVNSDAGFDANSCAVLSAIGKQSPDINQGINRFDPLKQGAGDQGIIFGYATNETEFFMPAPITYAHLLMQKQSELRKKNILPWLRPDAKSQVTFKYNNGNIIAIDTVVLSTQHQENITQKYLKEAVMDEIIKPVLPDKWLTKNTKFFINPTGRFVIGGPMGDCGVTGRKIIVDTYGGMSRHGGGAFSGKDPSKVDRSAAYAARYVAKNIVASGLAARCEIQLSYAIGIAEPISIMIDTFNTGKISNSALISLVRSIFDLRPYGLIKMLNLLQPIYLKTAVYGHFGRKEFPWENLDKVNELS</sequence>
<comment type="function">
    <text evidence="1">Catalyzes the formation of S-adenosylmethionine (AdoMet) from methionine and ATP. The overall synthetic reaction is composed of two sequential steps, AdoMet formation and the subsequent tripolyphosphate hydrolysis which occurs prior to release of AdoMet from the enzyme.</text>
</comment>
<comment type="catalytic activity">
    <reaction evidence="1">
        <text>L-methionine + ATP + H2O = S-adenosyl-L-methionine + phosphate + diphosphate</text>
        <dbReference type="Rhea" id="RHEA:21080"/>
        <dbReference type="ChEBI" id="CHEBI:15377"/>
        <dbReference type="ChEBI" id="CHEBI:30616"/>
        <dbReference type="ChEBI" id="CHEBI:33019"/>
        <dbReference type="ChEBI" id="CHEBI:43474"/>
        <dbReference type="ChEBI" id="CHEBI:57844"/>
        <dbReference type="ChEBI" id="CHEBI:59789"/>
        <dbReference type="EC" id="2.5.1.6"/>
    </reaction>
</comment>
<comment type="cofactor">
    <cofactor evidence="1">
        <name>Mg(2+)</name>
        <dbReference type="ChEBI" id="CHEBI:18420"/>
    </cofactor>
    <text evidence="1">Binds 2 divalent ions per subunit.</text>
</comment>
<comment type="cofactor">
    <cofactor evidence="1">
        <name>K(+)</name>
        <dbReference type="ChEBI" id="CHEBI:29103"/>
    </cofactor>
    <text evidence="1">Binds 1 potassium ion per subunit.</text>
</comment>
<comment type="pathway">
    <text evidence="1">Amino-acid biosynthesis; S-adenosyl-L-methionine biosynthesis; S-adenosyl-L-methionine from L-methionine: step 1/1.</text>
</comment>
<comment type="subunit">
    <text evidence="1">Homotetramer; dimer of dimers.</text>
</comment>
<comment type="subcellular location">
    <subcellularLocation>
        <location evidence="1">Cytoplasm</location>
    </subcellularLocation>
</comment>
<comment type="similarity">
    <text evidence="1">Belongs to the AdoMet synthase family.</text>
</comment>
<keyword id="KW-0067">ATP-binding</keyword>
<keyword id="KW-0963">Cytoplasm</keyword>
<keyword id="KW-0460">Magnesium</keyword>
<keyword id="KW-0479">Metal-binding</keyword>
<keyword id="KW-0547">Nucleotide-binding</keyword>
<keyword id="KW-0554">One-carbon metabolism</keyword>
<keyword id="KW-0630">Potassium</keyword>
<keyword id="KW-1185">Reference proteome</keyword>
<keyword id="KW-0808">Transferase</keyword>
<protein>
    <recommendedName>
        <fullName evidence="1">S-adenosylmethionine synthase</fullName>
        <shortName evidence="1">AdoMet synthase</shortName>
        <ecNumber evidence="1">2.5.1.6</ecNumber>
    </recommendedName>
    <alternativeName>
        <fullName evidence="1">MAT</fullName>
    </alternativeName>
    <alternativeName>
        <fullName evidence="1">Methionine adenosyltransferase</fullName>
    </alternativeName>
</protein>
<reference key="1">
    <citation type="journal article" date="2000" name="Nature">
        <title>Genome sequence of the endocellular bacterial symbiont of aphids Buchnera sp. APS.</title>
        <authorList>
            <person name="Shigenobu S."/>
            <person name="Watanabe H."/>
            <person name="Hattori M."/>
            <person name="Sakaki Y."/>
            <person name="Ishikawa H."/>
        </authorList>
    </citation>
    <scope>NUCLEOTIDE SEQUENCE [LARGE SCALE GENOMIC DNA]</scope>
    <source>
        <strain>APS</strain>
    </source>
</reference>
<organism>
    <name type="scientific">Buchnera aphidicola subsp. Acyrthosiphon pisum (strain APS)</name>
    <name type="common">Acyrthosiphon pisum symbiotic bacterium</name>
    <dbReference type="NCBI Taxonomy" id="107806"/>
    <lineage>
        <taxon>Bacteria</taxon>
        <taxon>Pseudomonadati</taxon>
        <taxon>Pseudomonadota</taxon>
        <taxon>Gammaproteobacteria</taxon>
        <taxon>Enterobacterales</taxon>
        <taxon>Erwiniaceae</taxon>
        <taxon>Buchnera</taxon>
    </lineage>
</organism>
<proteinExistence type="inferred from homology"/>